<reference key="1">
    <citation type="journal article" date="2022" name="J. Infect. Dis.">
        <title>Exportation of Monkeypox virus from the African continent.</title>
        <authorList>
            <person name="Mauldin M.R."/>
            <person name="McCollum A.M."/>
            <person name="Nakazawa Y.J."/>
            <person name="Mandra A."/>
            <person name="Whitehouse E.R."/>
            <person name="Davidson W."/>
            <person name="Zhao H."/>
            <person name="Gao J."/>
            <person name="Li Y."/>
            <person name="Doty J."/>
            <person name="Yinka-Ogunleye A."/>
            <person name="Akinpelu A."/>
            <person name="Aruna O."/>
            <person name="Naidoo D."/>
            <person name="Lewandowski K."/>
            <person name="Afrough B."/>
            <person name="Graham V."/>
            <person name="Aarons E."/>
            <person name="Hewson R."/>
            <person name="Vipond R."/>
            <person name="Dunning J."/>
            <person name="Chand M."/>
            <person name="Brown C."/>
            <person name="Cohen-Gihon I."/>
            <person name="Erez N."/>
            <person name="Shifman O."/>
            <person name="Israeli O."/>
            <person name="Sharon M."/>
            <person name="Schwartz E."/>
            <person name="Beth-Din A."/>
            <person name="Zvi A."/>
            <person name="Mak T.M."/>
            <person name="Ng Y.K."/>
            <person name="Cui L."/>
            <person name="Lin R.T.P."/>
            <person name="Olson V.A."/>
            <person name="Brooks T."/>
            <person name="Paran N."/>
            <person name="Ihekweazu C."/>
            <person name="Reynolds M.G."/>
        </authorList>
    </citation>
    <scope>NUCLEOTIDE SEQUENCE [LARGE SCALE GENOMIC DNA]</scope>
    <source>
        <strain>MPXV-M5312_HM12_Rivers</strain>
    </source>
</reference>
<comment type="function">
    <text evidence="1">May play a role in cell adhesion and is important for virus virulence in vivo, although it is not required for the virus life cycle in cell cultures.</text>
</comment>
<comment type="subcellular location">
    <subcellularLocation>
        <location evidence="1">Virion membrane</location>
        <topology evidence="2">Single-pass type II membrane protein</topology>
    </subcellularLocation>
    <subcellularLocation>
        <location evidence="1">Host membrane</location>
    </subcellularLocation>
    <text evidence="1">Present at the surface of intracellular mature virus (IMV). At host cell membrane is present in patches consistant with cell adhesion locations.</text>
</comment>
<comment type="similarity">
    <text evidence="3">Belongs to the orthopoxvirus OPG059 family.</text>
</comment>
<organismHost>
    <name type="scientific">Cynomys gunnisoni</name>
    <name type="common">Gunnison's prairie dog</name>
    <name type="synonym">Spermophilus gunnisoni</name>
    <dbReference type="NCBI Taxonomy" id="45479"/>
</organismHost>
<organismHost>
    <name type="scientific">Cynomys leucurus</name>
    <name type="common">White-tailed prairie dog</name>
    <dbReference type="NCBI Taxonomy" id="99825"/>
</organismHost>
<organismHost>
    <name type="scientific">Cynomys ludovicianus</name>
    <name type="common">Black-tailed prairie dog</name>
    <dbReference type="NCBI Taxonomy" id="45480"/>
</organismHost>
<organismHost>
    <name type="scientific">Cynomys mexicanus</name>
    <name type="common">Mexican prairie dog</name>
    <dbReference type="NCBI Taxonomy" id="99826"/>
</organismHost>
<organismHost>
    <name type="scientific">Cynomys parvidens</name>
    <name type="common">Utah prairie dog</name>
    <dbReference type="NCBI Taxonomy" id="99827"/>
</organismHost>
<organismHost>
    <name type="scientific">Gliridae</name>
    <name type="common">dormice</name>
    <dbReference type="NCBI Taxonomy" id="30650"/>
</organismHost>
<organismHost>
    <name type="scientific">Heliosciurus ruwenzorii</name>
    <name type="common">Ruwenzori sun squirrel</name>
    <dbReference type="NCBI Taxonomy" id="226685"/>
</organismHost>
<organismHost>
    <name type="scientific">Homo sapiens</name>
    <name type="common">Human</name>
    <dbReference type="NCBI Taxonomy" id="9606"/>
</organismHost>
<organismHost>
    <name type="scientific">Mus musculus</name>
    <name type="common">Mouse</name>
    <dbReference type="NCBI Taxonomy" id="10090"/>
</organismHost>
<keyword id="KW-1043">Host membrane</keyword>
<keyword id="KW-0426">Late protein</keyword>
<keyword id="KW-0472">Membrane</keyword>
<keyword id="KW-1185">Reference proteome</keyword>
<keyword id="KW-0735">Signal-anchor</keyword>
<keyword id="KW-0812">Transmembrane</keyword>
<keyword id="KW-1133">Transmembrane helix</keyword>
<keyword id="KW-0946">Virion</keyword>
<dbReference type="EMBL" id="MT903340">
    <property type="protein sequence ID" value="QNP12915.1"/>
    <property type="molecule type" value="Genomic_DNA"/>
</dbReference>
<dbReference type="RefSeq" id="YP_010377042.1">
    <property type="nucleotide sequence ID" value="NC_063383.1"/>
</dbReference>
<dbReference type="SMR" id="A0A7H0DN32"/>
<dbReference type="GeneID" id="72551455"/>
<dbReference type="Proteomes" id="UP000516359">
    <property type="component" value="Genome"/>
</dbReference>
<dbReference type="GO" id="GO:0033644">
    <property type="term" value="C:host cell membrane"/>
    <property type="evidence" value="ECO:0007669"/>
    <property type="project" value="UniProtKB-SubCell"/>
</dbReference>
<dbReference type="GO" id="GO:0016020">
    <property type="term" value="C:membrane"/>
    <property type="evidence" value="ECO:0007669"/>
    <property type="project" value="UniProtKB-KW"/>
</dbReference>
<dbReference type="GO" id="GO:0055036">
    <property type="term" value="C:virion membrane"/>
    <property type="evidence" value="ECO:0007669"/>
    <property type="project" value="UniProtKB-SubCell"/>
</dbReference>
<protein>
    <recommendedName>
        <fullName>Protein OPG059</fullName>
    </recommendedName>
</protein>
<gene>
    <name type="primary">OPG059</name>
</gene>
<sequence>MVIGLVIFVSVAATIVGVLSNVLDMIMYVEENNEEDAKIKEEQELLLLY</sequence>
<feature type="chain" id="PRO_0000457663" description="Protein OPG059">
    <location>
        <begin position="1"/>
        <end position="49"/>
    </location>
</feature>
<feature type="topological domain" description="Virion surface" evidence="2">
    <location>
        <position position="1"/>
    </location>
</feature>
<feature type="transmembrane region" description="Helical" evidence="2">
    <location>
        <begin position="2"/>
        <end position="22"/>
    </location>
</feature>
<feature type="topological domain" description="Intravirion" evidence="2">
    <location>
        <begin position="23"/>
        <end position="49"/>
    </location>
</feature>
<evidence type="ECO:0000250" key="1">
    <source>
        <dbReference type="UniProtKB" id="P0DTM8"/>
    </source>
</evidence>
<evidence type="ECO:0000255" key="2"/>
<evidence type="ECO:0000305" key="3"/>
<proteinExistence type="inferred from homology"/>
<name>PG059_MONPV</name>
<organism>
    <name type="scientific">Monkeypox virus</name>
    <dbReference type="NCBI Taxonomy" id="10244"/>
    <lineage>
        <taxon>Viruses</taxon>
        <taxon>Varidnaviria</taxon>
        <taxon>Bamfordvirae</taxon>
        <taxon>Nucleocytoviricota</taxon>
        <taxon>Pokkesviricetes</taxon>
        <taxon>Chitovirales</taxon>
        <taxon>Poxviridae</taxon>
        <taxon>Chordopoxvirinae</taxon>
        <taxon>Orthopoxvirus</taxon>
    </lineage>
</organism>
<accession>A0A7H0DN32</accession>